<proteinExistence type="inferred from homology"/>
<sequence length="453" mass="50091">MQVTETLSEGLKHEFKISVPASDLDAKAGAKLVDLKDKVRINGFRPGKVPVAHLKKVYGRSVMAETIDQTIRDTNTQLFSERGFRLATEPKITMPSEQAEVEELLSGKTDLTYTVAIEVVPSIALADFKTFQVEKPVADVTDADVDEAIKRIADTNRGYAAKADGAKAESGDRVTINFKGTINGEVFEGGTGEGIQVVIGSNTFIPGFEEQLTGIGAGETRTLKVSFPKNYMNDKLAGQPAEFETTATSIEAPQDIAIDDEFAKTLGLESLDKLKEAARERLVAEFAGATRQRVKRALLDRLDEAHRFEAPPSLVDEEFNLMWNSVKAEMDSAGKTFADEDTTEDAAKEEYRKIADRRVRLGLVLSEIGEKNKITVTDDEVGRAVIERARQMPGREKEVWDYYRSNAQALAQLRAPIYEDKVVDFILELANVTEKKVSREDLYKDDEAEKTAA</sequence>
<accession>Q89KG0</accession>
<organism>
    <name type="scientific">Bradyrhizobium diazoefficiens (strain JCM 10833 / BCRC 13528 / IAM 13628 / NBRC 14792 / USDA 110)</name>
    <dbReference type="NCBI Taxonomy" id="224911"/>
    <lineage>
        <taxon>Bacteria</taxon>
        <taxon>Pseudomonadati</taxon>
        <taxon>Pseudomonadota</taxon>
        <taxon>Alphaproteobacteria</taxon>
        <taxon>Hyphomicrobiales</taxon>
        <taxon>Nitrobacteraceae</taxon>
        <taxon>Bradyrhizobium</taxon>
    </lineage>
</organism>
<comment type="function">
    <text evidence="1">Involved in protein export. Acts as a chaperone by maintaining the newly synthesized protein in an open conformation. Functions as a peptidyl-prolyl cis-trans isomerase.</text>
</comment>
<comment type="catalytic activity">
    <reaction evidence="1">
        <text>[protein]-peptidylproline (omega=180) = [protein]-peptidylproline (omega=0)</text>
        <dbReference type="Rhea" id="RHEA:16237"/>
        <dbReference type="Rhea" id="RHEA-COMP:10747"/>
        <dbReference type="Rhea" id="RHEA-COMP:10748"/>
        <dbReference type="ChEBI" id="CHEBI:83833"/>
        <dbReference type="ChEBI" id="CHEBI:83834"/>
        <dbReference type="EC" id="5.2.1.8"/>
    </reaction>
</comment>
<comment type="subcellular location">
    <subcellularLocation>
        <location>Cytoplasm</location>
    </subcellularLocation>
    <text evidence="1">About half TF is bound to the ribosome near the polypeptide exit tunnel while the other half is free in the cytoplasm.</text>
</comment>
<comment type="domain">
    <text evidence="1">Consists of 3 domains; the N-terminus binds the ribosome, the middle domain has PPIase activity, while the C-terminus has intrinsic chaperone activity on its own.</text>
</comment>
<comment type="similarity">
    <text evidence="1">Belongs to the FKBP-type PPIase family. Tig subfamily.</text>
</comment>
<dbReference type="EC" id="5.2.1.8" evidence="1"/>
<dbReference type="EMBL" id="BA000040">
    <property type="protein sequence ID" value="BAC50210.1"/>
    <property type="molecule type" value="Genomic_DNA"/>
</dbReference>
<dbReference type="RefSeq" id="NP_771585.1">
    <property type="nucleotide sequence ID" value="NC_004463.1"/>
</dbReference>
<dbReference type="RefSeq" id="WP_011087709.1">
    <property type="nucleotide sequence ID" value="NC_004463.1"/>
</dbReference>
<dbReference type="SMR" id="Q89KG0"/>
<dbReference type="FunCoup" id="Q89KG0">
    <property type="interactions" value="801"/>
</dbReference>
<dbReference type="STRING" id="224911.AAV28_22075"/>
<dbReference type="EnsemblBacteria" id="BAC50210">
    <property type="protein sequence ID" value="BAC50210"/>
    <property type="gene ID" value="BAC50210"/>
</dbReference>
<dbReference type="GeneID" id="46491953"/>
<dbReference type="KEGG" id="bja:bll4945"/>
<dbReference type="PATRIC" id="fig|224911.44.peg.4799"/>
<dbReference type="eggNOG" id="COG0544">
    <property type="taxonomic scope" value="Bacteria"/>
</dbReference>
<dbReference type="HOGENOM" id="CLU_033058_2_2_5"/>
<dbReference type="InParanoid" id="Q89KG0"/>
<dbReference type="OrthoDB" id="9767721at2"/>
<dbReference type="PhylomeDB" id="Q89KG0"/>
<dbReference type="Proteomes" id="UP000002526">
    <property type="component" value="Chromosome"/>
</dbReference>
<dbReference type="GO" id="GO:0005737">
    <property type="term" value="C:cytoplasm"/>
    <property type="evidence" value="ECO:0007669"/>
    <property type="project" value="UniProtKB-SubCell"/>
</dbReference>
<dbReference type="GO" id="GO:0003755">
    <property type="term" value="F:peptidyl-prolyl cis-trans isomerase activity"/>
    <property type="evidence" value="ECO:0000318"/>
    <property type="project" value="GO_Central"/>
</dbReference>
<dbReference type="GO" id="GO:0044183">
    <property type="term" value="F:protein folding chaperone"/>
    <property type="evidence" value="ECO:0000318"/>
    <property type="project" value="GO_Central"/>
</dbReference>
<dbReference type="GO" id="GO:0043022">
    <property type="term" value="F:ribosome binding"/>
    <property type="evidence" value="ECO:0000318"/>
    <property type="project" value="GO_Central"/>
</dbReference>
<dbReference type="GO" id="GO:0051083">
    <property type="term" value="P:'de novo' cotranslational protein folding"/>
    <property type="evidence" value="ECO:0000318"/>
    <property type="project" value="GO_Central"/>
</dbReference>
<dbReference type="GO" id="GO:0051301">
    <property type="term" value="P:cell division"/>
    <property type="evidence" value="ECO:0007669"/>
    <property type="project" value="UniProtKB-KW"/>
</dbReference>
<dbReference type="GO" id="GO:0061077">
    <property type="term" value="P:chaperone-mediated protein folding"/>
    <property type="evidence" value="ECO:0000318"/>
    <property type="project" value="GO_Central"/>
</dbReference>
<dbReference type="GO" id="GO:0015031">
    <property type="term" value="P:protein transport"/>
    <property type="evidence" value="ECO:0007669"/>
    <property type="project" value="UniProtKB-UniRule"/>
</dbReference>
<dbReference type="GO" id="GO:0043335">
    <property type="term" value="P:protein unfolding"/>
    <property type="evidence" value="ECO:0000318"/>
    <property type="project" value="GO_Central"/>
</dbReference>
<dbReference type="FunFam" id="3.10.50.40:FF:000001">
    <property type="entry name" value="Trigger factor"/>
    <property type="match status" value="1"/>
</dbReference>
<dbReference type="Gene3D" id="3.10.50.40">
    <property type="match status" value="1"/>
</dbReference>
<dbReference type="Gene3D" id="3.30.70.1050">
    <property type="entry name" value="Trigger factor ribosome-binding domain"/>
    <property type="match status" value="1"/>
</dbReference>
<dbReference type="Gene3D" id="1.10.3120.10">
    <property type="entry name" value="Trigger factor, C-terminal domain"/>
    <property type="match status" value="1"/>
</dbReference>
<dbReference type="HAMAP" id="MF_00303">
    <property type="entry name" value="Trigger_factor_Tig"/>
    <property type="match status" value="1"/>
</dbReference>
<dbReference type="InterPro" id="IPR046357">
    <property type="entry name" value="PPIase_dom_sf"/>
</dbReference>
<dbReference type="InterPro" id="IPR001179">
    <property type="entry name" value="PPIase_FKBP_dom"/>
</dbReference>
<dbReference type="InterPro" id="IPR005215">
    <property type="entry name" value="Trig_fac"/>
</dbReference>
<dbReference type="InterPro" id="IPR008880">
    <property type="entry name" value="Trigger_fac_C"/>
</dbReference>
<dbReference type="InterPro" id="IPR037041">
    <property type="entry name" value="Trigger_fac_C_sf"/>
</dbReference>
<dbReference type="InterPro" id="IPR008881">
    <property type="entry name" value="Trigger_fac_ribosome-bd_bac"/>
</dbReference>
<dbReference type="InterPro" id="IPR036611">
    <property type="entry name" value="Trigger_fac_ribosome-bd_sf"/>
</dbReference>
<dbReference type="InterPro" id="IPR027304">
    <property type="entry name" value="Trigger_fact/SurA_dom_sf"/>
</dbReference>
<dbReference type="NCBIfam" id="TIGR00115">
    <property type="entry name" value="tig"/>
    <property type="match status" value="1"/>
</dbReference>
<dbReference type="PANTHER" id="PTHR30560">
    <property type="entry name" value="TRIGGER FACTOR CHAPERONE AND PEPTIDYL-PROLYL CIS/TRANS ISOMERASE"/>
    <property type="match status" value="1"/>
</dbReference>
<dbReference type="PANTHER" id="PTHR30560:SF3">
    <property type="entry name" value="TRIGGER FACTOR-LIKE PROTEIN TIG, CHLOROPLASTIC"/>
    <property type="match status" value="1"/>
</dbReference>
<dbReference type="Pfam" id="PF00254">
    <property type="entry name" value="FKBP_C"/>
    <property type="match status" value="1"/>
</dbReference>
<dbReference type="Pfam" id="PF05698">
    <property type="entry name" value="Trigger_C"/>
    <property type="match status" value="1"/>
</dbReference>
<dbReference type="Pfam" id="PF05697">
    <property type="entry name" value="Trigger_N"/>
    <property type="match status" value="1"/>
</dbReference>
<dbReference type="PIRSF" id="PIRSF003095">
    <property type="entry name" value="Trigger_factor"/>
    <property type="match status" value="1"/>
</dbReference>
<dbReference type="SUPFAM" id="SSF54534">
    <property type="entry name" value="FKBP-like"/>
    <property type="match status" value="1"/>
</dbReference>
<dbReference type="SUPFAM" id="SSF109998">
    <property type="entry name" value="Triger factor/SurA peptide-binding domain-like"/>
    <property type="match status" value="1"/>
</dbReference>
<dbReference type="SUPFAM" id="SSF102735">
    <property type="entry name" value="Trigger factor ribosome-binding domain"/>
    <property type="match status" value="1"/>
</dbReference>
<dbReference type="PROSITE" id="PS50059">
    <property type="entry name" value="FKBP_PPIASE"/>
    <property type="match status" value="1"/>
</dbReference>
<keyword id="KW-0131">Cell cycle</keyword>
<keyword id="KW-0132">Cell division</keyword>
<keyword id="KW-0143">Chaperone</keyword>
<keyword id="KW-0963">Cytoplasm</keyword>
<keyword id="KW-0413">Isomerase</keyword>
<keyword id="KW-1185">Reference proteome</keyword>
<keyword id="KW-0697">Rotamase</keyword>
<protein>
    <recommendedName>
        <fullName evidence="1">Trigger factor</fullName>
        <shortName evidence="1">TF</shortName>
        <ecNumber evidence="1">5.2.1.8</ecNumber>
    </recommendedName>
    <alternativeName>
        <fullName evidence="1">PPIase</fullName>
    </alternativeName>
</protein>
<gene>
    <name evidence="1" type="primary">tig</name>
    <name type="ordered locus">bll4945</name>
</gene>
<evidence type="ECO:0000255" key="1">
    <source>
        <dbReference type="HAMAP-Rule" id="MF_00303"/>
    </source>
</evidence>
<reference key="1">
    <citation type="journal article" date="2002" name="DNA Res.">
        <title>Complete genomic sequence of nitrogen-fixing symbiotic bacterium Bradyrhizobium japonicum USDA110.</title>
        <authorList>
            <person name="Kaneko T."/>
            <person name="Nakamura Y."/>
            <person name="Sato S."/>
            <person name="Minamisawa K."/>
            <person name="Uchiumi T."/>
            <person name="Sasamoto S."/>
            <person name="Watanabe A."/>
            <person name="Idesawa K."/>
            <person name="Iriguchi M."/>
            <person name="Kawashima K."/>
            <person name="Kohara M."/>
            <person name="Matsumoto M."/>
            <person name="Shimpo S."/>
            <person name="Tsuruoka H."/>
            <person name="Wada T."/>
            <person name="Yamada M."/>
            <person name="Tabata S."/>
        </authorList>
    </citation>
    <scope>NUCLEOTIDE SEQUENCE [LARGE SCALE GENOMIC DNA]</scope>
    <source>
        <strain>JCM 10833 / BCRC 13528 / IAM 13628 / NBRC 14792 / USDA 110</strain>
    </source>
</reference>
<feature type="chain" id="PRO_0000179323" description="Trigger factor">
    <location>
        <begin position="1"/>
        <end position="453"/>
    </location>
</feature>
<feature type="domain" description="PPIase FKBP-type" evidence="1">
    <location>
        <begin position="171"/>
        <end position="256"/>
    </location>
</feature>
<name>TIG_BRADU</name>